<sequence>MDLIFSLETWVLLAASLVLLYLYGTSTHGLFKKMGIPGPTPLPFIGTILEYRKGIWDFDIECRKKYGKMWGLFDGRQPLMVITDPDMIKTVLVKECYSVFTNRRSFGPVGFMKKAVSISEDEDWKRVRTLLSPTFTSGKLKEMLPIIAQYGDVLVKNLRQEAEKGKPVDLKEIFGAYSMDVITGTSFGVNIDSLRNPQDPFVKNVRRLLKFSFFDPLLLSITLFPFLTPIFEALHISMFPKDVMDFLKTSVEKIKDDRLKDKQKRRVDFLQLMINSQNSKEIDSHKALDDIEVVAQSIIILFAGYETTSSTLSFIMHLLATHPDVQQKLQEEIDTLLPNKELATYDTLVKMEYLDMVVNETLRLYPIAGRLERVCKKDVDINGTFIPKGTIVMMPTYALHRDPQHWTEPDEFRPERFSKKNKDNINPYIYHPFGAGPRNCLGMRFALMNIKLALVRLMQNFSFKLCKETQVPLKLGKQGLLQPEKPIVLKVVSRDGIIRGA</sequence>
<evidence type="ECO:0000250" key="1"/>
<evidence type="ECO:0000305" key="2"/>
<feature type="chain" id="PRO_0000051789" description="Cytochrome P450 3A6">
    <location>
        <begin position="1"/>
        <end position="501"/>
    </location>
</feature>
<feature type="binding site" description="axial binding residue" evidence="1">
    <location>
        <position position="440"/>
    </location>
    <ligand>
        <name>heme</name>
        <dbReference type="ChEBI" id="CHEBI:30413"/>
    </ligand>
    <ligandPart>
        <name>Fe</name>
        <dbReference type="ChEBI" id="CHEBI:18248"/>
    </ligandPart>
</feature>
<feature type="sequence conflict" description="In Ref. 1; AAA31430." evidence="2" ref="1">
    <original>GI</original>
    <variation>VIN</variation>
    <location>
        <begin position="54"/>
        <end position="55"/>
    </location>
</feature>
<feature type="sequence conflict" description="In Ref. 1; AAA31430." evidence="2" ref="1">
    <original>GKPVD</original>
    <variation>ASPST</variation>
    <location>
        <begin position="165"/>
        <end position="169"/>
    </location>
</feature>
<feature type="sequence conflict" description="In Ref. 1; AAA31430." evidence="2" ref="1">
    <location>
        <position position="393"/>
    </location>
</feature>
<feature type="sequence conflict" description="In Ref. 1; AAA31430." evidence="2" ref="1">
    <original>RD</original>
    <variation>ES</variation>
    <location>
        <begin position="494"/>
        <end position="495"/>
    </location>
</feature>
<name>CP3A6_RABIT</name>
<proteinExistence type="evidence at transcript level"/>
<keyword id="KW-0256">Endoplasmic reticulum</keyword>
<keyword id="KW-0349">Heme</keyword>
<keyword id="KW-0408">Iron</keyword>
<keyword id="KW-0472">Membrane</keyword>
<keyword id="KW-0479">Metal-binding</keyword>
<keyword id="KW-0492">Microsome</keyword>
<keyword id="KW-0503">Monooxygenase</keyword>
<keyword id="KW-0560">Oxidoreductase</keyword>
<keyword id="KW-1185">Reference proteome</keyword>
<protein>
    <recommendedName>
        <fullName>Cytochrome P450 3A6</fullName>
        <ecNumber>1.14.14.1</ecNumber>
    </recommendedName>
    <alternativeName>
        <fullName>CYPIIIA6</fullName>
    </alternativeName>
    <alternativeName>
        <fullName>Cytochrome P450-3C</fullName>
    </alternativeName>
</protein>
<comment type="function">
    <text>Exhibits progesterone 6 beta-hydroxylase activity.</text>
</comment>
<comment type="catalytic activity">
    <reaction>
        <text>an organic molecule + reduced [NADPH--hemoprotein reductase] + O2 = an alcohol + oxidized [NADPH--hemoprotein reductase] + H2O + H(+)</text>
        <dbReference type="Rhea" id="RHEA:17149"/>
        <dbReference type="Rhea" id="RHEA-COMP:11964"/>
        <dbReference type="Rhea" id="RHEA-COMP:11965"/>
        <dbReference type="ChEBI" id="CHEBI:15377"/>
        <dbReference type="ChEBI" id="CHEBI:15378"/>
        <dbReference type="ChEBI" id="CHEBI:15379"/>
        <dbReference type="ChEBI" id="CHEBI:30879"/>
        <dbReference type="ChEBI" id="CHEBI:57618"/>
        <dbReference type="ChEBI" id="CHEBI:58210"/>
        <dbReference type="ChEBI" id="CHEBI:142491"/>
        <dbReference type="EC" id="1.14.14.1"/>
    </reaction>
</comment>
<comment type="cofactor">
    <cofactor evidence="1">
        <name>heme</name>
        <dbReference type="ChEBI" id="CHEBI:30413"/>
    </cofactor>
</comment>
<comment type="subcellular location">
    <subcellularLocation>
        <location>Endoplasmic reticulum membrane</location>
        <topology>Peripheral membrane protein</topology>
    </subcellularLocation>
    <subcellularLocation>
        <location>Microsome membrane</location>
        <topology>Peripheral membrane protein</topology>
    </subcellularLocation>
</comment>
<comment type="induction">
    <text>By rifampicin.</text>
</comment>
<comment type="similarity">
    <text evidence="2">Belongs to the cytochrome P450 family.</text>
</comment>
<accession>P11707</accession>
<accession>Q29506</accession>
<dbReference type="EC" id="1.14.14.1"/>
<dbReference type="EMBL" id="M19139">
    <property type="protein sequence ID" value="AAA31430.1"/>
    <property type="molecule type" value="mRNA"/>
</dbReference>
<dbReference type="EMBL" id="J05034">
    <property type="protein sequence ID" value="AAA31178.1"/>
    <property type="molecule type" value="mRNA"/>
</dbReference>
<dbReference type="PIR" id="A29487">
    <property type="entry name" value="A29487"/>
</dbReference>
<dbReference type="PIR" id="A34236">
    <property type="entry name" value="A34236"/>
</dbReference>
<dbReference type="RefSeq" id="NP_001164739.1">
    <property type="nucleotide sequence ID" value="NM_001171268.2"/>
</dbReference>
<dbReference type="SMR" id="P11707"/>
<dbReference type="FunCoup" id="P11707">
    <property type="interactions" value="248"/>
</dbReference>
<dbReference type="STRING" id="9986.ENSOCUP00000034396"/>
<dbReference type="BindingDB" id="P11707"/>
<dbReference type="ChEMBL" id="CHEMBL1743541"/>
<dbReference type="PaxDb" id="9986-ENSOCUP00000016348"/>
<dbReference type="GeneID" id="100328954"/>
<dbReference type="KEGG" id="ocu:100328954"/>
<dbReference type="CTD" id="100328954"/>
<dbReference type="eggNOG" id="KOG0158">
    <property type="taxonomic scope" value="Eukaryota"/>
</dbReference>
<dbReference type="InParanoid" id="P11707"/>
<dbReference type="OrthoDB" id="1470350at2759"/>
<dbReference type="PRO" id="PR:P11707"/>
<dbReference type="Proteomes" id="UP000001811">
    <property type="component" value="Unplaced"/>
</dbReference>
<dbReference type="GO" id="GO:0005789">
    <property type="term" value="C:endoplasmic reticulum membrane"/>
    <property type="evidence" value="ECO:0007669"/>
    <property type="project" value="UniProtKB-SubCell"/>
</dbReference>
<dbReference type="GO" id="GO:0020037">
    <property type="term" value="F:heme binding"/>
    <property type="evidence" value="ECO:0007669"/>
    <property type="project" value="InterPro"/>
</dbReference>
<dbReference type="GO" id="GO:0005506">
    <property type="term" value="F:iron ion binding"/>
    <property type="evidence" value="ECO:0007669"/>
    <property type="project" value="InterPro"/>
</dbReference>
<dbReference type="GO" id="GO:0004497">
    <property type="term" value="F:monooxygenase activity"/>
    <property type="evidence" value="ECO:0000250"/>
    <property type="project" value="UniProtKB"/>
</dbReference>
<dbReference type="GO" id="GO:0016712">
    <property type="term" value="F:oxidoreductase activity, acting on paired donors, with incorporation or reduction of molecular oxygen, reduced flavin or flavoprotein as one donor, and incorporation of one atom of oxygen"/>
    <property type="evidence" value="ECO:0007669"/>
    <property type="project" value="UniProtKB-EC"/>
</dbReference>
<dbReference type="GO" id="GO:0050649">
    <property type="term" value="F:testosterone 6-beta-hydroxylase activity"/>
    <property type="evidence" value="ECO:0007669"/>
    <property type="project" value="TreeGrafter"/>
</dbReference>
<dbReference type="GO" id="GO:0070989">
    <property type="term" value="P:oxidative demethylation"/>
    <property type="evidence" value="ECO:0007669"/>
    <property type="project" value="TreeGrafter"/>
</dbReference>
<dbReference type="GO" id="GO:0008202">
    <property type="term" value="P:steroid metabolic process"/>
    <property type="evidence" value="ECO:0007669"/>
    <property type="project" value="TreeGrafter"/>
</dbReference>
<dbReference type="CDD" id="cd20650">
    <property type="entry name" value="CYP3A"/>
    <property type="match status" value="1"/>
</dbReference>
<dbReference type="FunFam" id="1.10.630.10:FF:000096">
    <property type="entry name" value="Cytochrome P450 3A4"/>
    <property type="match status" value="1"/>
</dbReference>
<dbReference type="Gene3D" id="1.10.630.10">
    <property type="entry name" value="Cytochrome P450"/>
    <property type="match status" value="1"/>
</dbReference>
<dbReference type="InterPro" id="IPR001128">
    <property type="entry name" value="Cyt_P450"/>
</dbReference>
<dbReference type="InterPro" id="IPR017972">
    <property type="entry name" value="Cyt_P450_CS"/>
</dbReference>
<dbReference type="InterPro" id="IPR008072">
    <property type="entry name" value="Cyt_P450_E_CYP3A"/>
</dbReference>
<dbReference type="InterPro" id="IPR002402">
    <property type="entry name" value="Cyt_P450_E_grp-II"/>
</dbReference>
<dbReference type="InterPro" id="IPR036396">
    <property type="entry name" value="Cyt_P450_sf"/>
</dbReference>
<dbReference type="InterPro" id="IPR050705">
    <property type="entry name" value="Cytochrome_P450_3A"/>
</dbReference>
<dbReference type="PANTHER" id="PTHR24302:SF38">
    <property type="entry name" value="CYTOCHROME P450 3A5"/>
    <property type="match status" value="1"/>
</dbReference>
<dbReference type="PANTHER" id="PTHR24302">
    <property type="entry name" value="CYTOCHROME P450 FAMILY 3"/>
    <property type="match status" value="1"/>
</dbReference>
<dbReference type="Pfam" id="PF00067">
    <property type="entry name" value="p450"/>
    <property type="match status" value="1"/>
</dbReference>
<dbReference type="PRINTS" id="PR00464">
    <property type="entry name" value="EP450II"/>
</dbReference>
<dbReference type="PRINTS" id="PR01689">
    <property type="entry name" value="EP450IICYP3A"/>
</dbReference>
<dbReference type="PRINTS" id="PR00385">
    <property type="entry name" value="P450"/>
</dbReference>
<dbReference type="SUPFAM" id="SSF48264">
    <property type="entry name" value="Cytochrome P450"/>
    <property type="match status" value="1"/>
</dbReference>
<dbReference type="PROSITE" id="PS00086">
    <property type="entry name" value="CYTOCHROME_P450"/>
    <property type="match status" value="1"/>
</dbReference>
<gene>
    <name type="primary">CYP3A6</name>
</gene>
<organism>
    <name type="scientific">Oryctolagus cuniculus</name>
    <name type="common">Rabbit</name>
    <dbReference type="NCBI Taxonomy" id="9986"/>
    <lineage>
        <taxon>Eukaryota</taxon>
        <taxon>Metazoa</taxon>
        <taxon>Chordata</taxon>
        <taxon>Craniata</taxon>
        <taxon>Vertebrata</taxon>
        <taxon>Euteleostomi</taxon>
        <taxon>Mammalia</taxon>
        <taxon>Eutheria</taxon>
        <taxon>Euarchontoglires</taxon>
        <taxon>Glires</taxon>
        <taxon>Lagomorpha</taxon>
        <taxon>Leporidae</taxon>
        <taxon>Oryctolagus</taxon>
    </lineage>
</organism>
<reference key="1">
    <citation type="journal article" date="1988" name="DNA">
        <title>Complete sequence of cytochrome P450 3c cDNA and presence of two mRNA species with 3' untranslated regions of different lengths.</title>
        <authorList>
            <person name="Dalet C."/>
            <person name="Clair P."/>
            <person name="Daujat M."/>
            <person name="Fort P."/>
            <person name="Blanchard J.-M."/>
            <person name="Maurel P."/>
        </authorList>
    </citation>
    <scope>NUCLEOTIDE SEQUENCE [MRNA]</scope>
</reference>
<reference key="2">
    <citation type="journal article" date="1989" name="J. Biol. Chem.">
        <title>Regulation of the rabbit cytochrome P-450 3c gene. Age-dependent expression and transcriptional activation by rifampicin.</title>
        <authorList>
            <person name="Potenza C.L."/>
            <person name="Pendurthi U.R."/>
            <person name="Strom D.K."/>
            <person name="Tukey R.H."/>
            <person name="Griffin K.J."/>
            <person name="Schwab G.E."/>
            <person name="Johnson E.F."/>
        </authorList>
    </citation>
    <scope>NUCLEOTIDE SEQUENCE [MRNA]</scope>
</reference>